<comment type="domain">
    <text evidence="1">Contains an N-terminal DNA-binding winged helix-turn-helix domain and a C-terminal regulatory domain (or effector binding domain) resembling phosphoribosyltransferase (PRT) domain.</text>
</comment>
<comment type="similarity">
    <text evidence="1">Belongs to the purine/pyrimidine phosphoribosyltransferase family. GfcR subfamily.</text>
</comment>
<gene>
    <name evidence="1" type="primary">gfcR</name>
    <name type="ordered locus">PTO0465</name>
</gene>
<protein>
    <recommendedName>
        <fullName evidence="1">Transcriptional regulator GfcR</fullName>
    </recommendedName>
</protein>
<proteinExistence type="inferred from homology"/>
<evidence type="ECO:0000255" key="1">
    <source>
        <dbReference type="HAMAP-Rule" id="MF_01214"/>
    </source>
</evidence>
<feature type="chain" id="PRO_0000298905" description="Transcriptional regulator GfcR">
    <location>
        <begin position="1"/>
        <end position="195"/>
    </location>
</feature>
<accession>Q6L1V2</accession>
<organism>
    <name type="scientific">Picrophilus torridus (strain ATCC 700027 / DSM 9790 / JCM 10055 / NBRC 100828 / KAW 2/3)</name>
    <dbReference type="NCBI Taxonomy" id="1122961"/>
    <lineage>
        <taxon>Archaea</taxon>
        <taxon>Methanobacteriati</taxon>
        <taxon>Thermoplasmatota</taxon>
        <taxon>Thermoplasmata</taxon>
        <taxon>Thermoplasmatales</taxon>
        <taxon>Picrophilaceae</taxon>
        <taxon>Picrophilus</taxon>
    </lineage>
</organism>
<name>GFCR_PICTO</name>
<dbReference type="EMBL" id="AE017261">
    <property type="protein sequence ID" value="AAT43050.1"/>
    <property type="molecule type" value="Genomic_DNA"/>
</dbReference>
<dbReference type="RefSeq" id="WP_011177266.1">
    <property type="nucleotide sequence ID" value="NC_005877.1"/>
</dbReference>
<dbReference type="SMR" id="Q6L1V2"/>
<dbReference type="STRING" id="263820.PTO0465"/>
<dbReference type="PaxDb" id="263820-PTO0465"/>
<dbReference type="GeneID" id="2845388"/>
<dbReference type="KEGG" id="pto:PTO0465"/>
<dbReference type="eggNOG" id="arCOG00028">
    <property type="taxonomic scope" value="Archaea"/>
</dbReference>
<dbReference type="HOGENOM" id="CLU_111001_0_0_2"/>
<dbReference type="InParanoid" id="Q6L1V2"/>
<dbReference type="OrthoDB" id="68893at2157"/>
<dbReference type="Proteomes" id="UP000000438">
    <property type="component" value="Chromosome"/>
</dbReference>
<dbReference type="GO" id="GO:0003677">
    <property type="term" value="F:DNA binding"/>
    <property type="evidence" value="ECO:0007669"/>
    <property type="project" value="UniProtKB-UniRule"/>
</dbReference>
<dbReference type="GO" id="GO:0010468">
    <property type="term" value="P:regulation of gene expression"/>
    <property type="evidence" value="ECO:0007669"/>
    <property type="project" value="UniProtKB-UniRule"/>
</dbReference>
<dbReference type="CDD" id="cd06223">
    <property type="entry name" value="PRTases_typeI"/>
    <property type="match status" value="1"/>
</dbReference>
<dbReference type="Gene3D" id="3.40.50.2020">
    <property type="match status" value="1"/>
</dbReference>
<dbReference type="HAMAP" id="MF_01214">
    <property type="entry name" value="GfcR"/>
    <property type="match status" value="1"/>
</dbReference>
<dbReference type="InterPro" id="IPR022854">
    <property type="entry name" value="GfcR-like"/>
</dbReference>
<dbReference type="InterPro" id="IPR000836">
    <property type="entry name" value="PRibTrfase_dom"/>
</dbReference>
<dbReference type="InterPro" id="IPR029057">
    <property type="entry name" value="PRTase-like"/>
</dbReference>
<dbReference type="NCBIfam" id="NF002620">
    <property type="entry name" value="PRK02277.1"/>
    <property type="match status" value="1"/>
</dbReference>
<dbReference type="Pfam" id="PF00156">
    <property type="entry name" value="Pribosyltran"/>
    <property type="match status" value="1"/>
</dbReference>
<dbReference type="SUPFAM" id="SSF53271">
    <property type="entry name" value="PRTase-like"/>
    <property type="match status" value="1"/>
</dbReference>
<dbReference type="PROSITE" id="PS00103">
    <property type="entry name" value="PUR_PYR_PR_TRANSFER"/>
    <property type="match status" value="1"/>
</dbReference>
<keyword id="KW-0238">DNA-binding</keyword>
<keyword id="KW-0804">Transcription</keyword>
<keyword id="KW-0805">Transcription regulation</keyword>
<sequence>MKSLEELYNRAIEMKNKGMSDKEISTELHLSVNTVTWLLSKEFVNERSAKDVKIGWRSAGVFGSRIGSLAEIMIDIAEEESNKMNLNIDAFLGITINGIPFATLASYMTGKELIVYRPHPSRKEGFFSSNFASVVNKNVVIMDDVVSTGETMKRTIEDVKKSGGKPVLCIVIASKLNIDEINGVKIRAIMRTVMV</sequence>
<reference key="1">
    <citation type="journal article" date="2004" name="Proc. Natl. Acad. Sci. U.S.A.">
        <title>Genome sequence of Picrophilus torridus and its implications for life around pH 0.</title>
        <authorList>
            <person name="Fuetterer O."/>
            <person name="Angelov A."/>
            <person name="Liesegang H."/>
            <person name="Gottschalk G."/>
            <person name="Schleper C."/>
            <person name="Schepers B."/>
            <person name="Dock C."/>
            <person name="Antranikian G."/>
            <person name="Liebl W."/>
        </authorList>
    </citation>
    <scope>NUCLEOTIDE SEQUENCE [LARGE SCALE GENOMIC DNA]</scope>
    <source>
        <strain>ATCC 700027 / DSM 9790 / JCM 10055 / NBRC 100828 / KAW 2/3</strain>
    </source>
</reference>